<comment type="function">
    <text>Primary role of GHRH is to release GH from the pituitary.</text>
</comment>
<comment type="function">
    <text>PACAP plays pivotal roles as a neurotransmitter and/or a neuromodulator.</text>
</comment>
<comment type="subcellular location">
    <subcellularLocation>
        <location>Secreted</location>
    </subcellularLocation>
</comment>
<comment type="tissue specificity">
    <text>Brain, testis, ovary and stomach. Not pancreas, pituitary, muscle and liver.</text>
</comment>
<comment type="similarity">
    <text evidence="3">Belongs to the glucagon family.</text>
</comment>
<reference key="1">
    <citation type="journal article" date="1995" name="Mol. Cell. Endocrinol.">
        <title>Sequence and expression of cDNA for pituitary adenylate cyclase activating polypeptide (PACAP) and growth hormone-releasing hormone (GHRH)-like peptide in catfish.</title>
        <authorList>
            <person name="McRory J.E."/>
            <person name="Parker D.B."/>
            <person name="Ngamvongchon S."/>
            <person name="Sherwood N.M."/>
        </authorList>
    </citation>
    <scope>NUCLEOTIDE SEQUENCE [MRNA]</scope>
    <source>
        <tissue>Brain</tissue>
    </source>
</reference>
<organism>
    <name type="scientific">Clarias macrocephalus</name>
    <name type="common">Bighead catfish</name>
    <dbReference type="NCBI Taxonomy" id="35657"/>
    <lineage>
        <taxon>Eukaryota</taxon>
        <taxon>Metazoa</taxon>
        <taxon>Chordata</taxon>
        <taxon>Craniata</taxon>
        <taxon>Vertebrata</taxon>
        <taxon>Euteleostomi</taxon>
        <taxon>Actinopterygii</taxon>
        <taxon>Neopterygii</taxon>
        <taxon>Teleostei</taxon>
        <taxon>Ostariophysi</taxon>
        <taxon>Siluriformes</taxon>
        <taxon>Clariidae</taxon>
        <taxon>Clarias</taxon>
    </lineage>
</organism>
<feature type="signal peptide" evidence="1">
    <location>
        <begin position="1"/>
        <end position="20"/>
    </location>
</feature>
<feature type="propeptide" id="PRO_0000011521">
    <location>
        <begin position="21"/>
        <end position="82"/>
    </location>
</feature>
<feature type="peptide" id="PRO_0000011522" description="Growth hormone-releasing factor">
    <location>
        <begin position="83"/>
        <end position="127"/>
    </location>
</feature>
<feature type="peptide" id="PRO_0000011523" description="Pituitary adenylate cyclase-activating polypeptide">
    <location>
        <begin position="130"/>
        <end position="167"/>
    </location>
</feature>
<feature type="propeptide" id="PRO_0000011524">
    <location>
        <begin position="171"/>
        <end position="195"/>
    </location>
</feature>
<feature type="region of interest" description="Disordered" evidence="2">
    <location>
        <begin position="113"/>
        <end position="132"/>
    </location>
</feature>
<feature type="compositionally biased region" description="Acidic residues" evidence="2">
    <location>
        <begin position="115"/>
        <end position="124"/>
    </location>
</feature>
<feature type="modified residue" description="Lysine amide" evidence="1">
    <location>
        <position position="167"/>
    </location>
</feature>
<keyword id="KW-0027">Amidation</keyword>
<keyword id="KW-0165">Cleavage on pair of basic residues</keyword>
<keyword id="KW-0372">Hormone</keyword>
<keyword id="KW-0964">Secreted</keyword>
<keyword id="KW-0732">Signal</keyword>
<accession>P48144</accession>
<protein>
    <recommendedName>
        <fullName>Glucagon family neuropeptides</fullName>
    </recommendedName>
    <component>
        <recommendedName>
            <fullName>Growth hormone-releasing factor</fullName>
            <shortName>GRF</shortName>
        </recommendedName>
        <alternativeName>
            <fullName>Growth hormone-releasing hormone</fullName>
            <shortName>GHRH</shortName>
        </alternativeName>
    </component>
    <component>
        <recommendedName>
            <fullName>Pituitary adenylate cyclase-activating polypeptide</fullName>
            <shortName>PACAP</shortName>
        </recommendedName>
    </component>
</protein>
<proteinExistence type="evidence at transcript level"/>
<name>PACA_CLAMA</name>
<dbReference type="EMBL" id="X79078">
    <property type="protein sequence ID" value="CAA55684.1"/>
    <property type="molecule type" value="mRNA"/>
</dbReference>
<dbReference type="PIR" id="I50456">
    <property type="entry name" value="I50456"/>
</dbReference>
<dbReference type="SMR" id="P48144"/>
<dbReference type="GO" id="GO:0005576">
    <property type="term" value="C:extracellular region"/>
    <property type="evidence" value="ECO:0007669"/>
    <property type="project" value="UniProtKB-SubCell"/>
</dbReference>
<dbReference type="GO" id="GO:0043005">
    <property type="term" value="C:neuron projection"/>
    <property type="evidence" value="ECO:0007669"/>
    <property type="project" value="TreeGrafter"/>
</dbReference>
<dbReference type="GO" id="GO:0043204">
    <property type="term" value="C:perikaryon"/>
    <property type="evidence" value="ECO:0007669"/>
    <property type="project" value="TreeGrafter"/>
</dbReference>
<dbReference type="GO" id="GO:0005184">
    <property type="term" value="F:neuropeptide hormone activity"/>
    <property type="evidence" value="ECO:0007669"/>
    <property type="project" value="InterPro"/>
</dbReference>
<dbReference type="GO" id="GO:0051428">
    <property type="term" value="F:peptide hormone receptor binding"/>
    <property type="evidence" value="ECO:0007669"/>
    <property type="project" value="TreeGrafter"/>
</dbReference>
<dbReference type="GO" id="GO:0016521">
    <property type="term" value="F:pituitary adenylate cyclase activating polypeptide activity"/>
    <property type="evidence" value="ECO:0007669"/>
    <property type="project" value="TreeGrafter"/>
</dbReference>
<dbReference type="GO" id="GO:0007189">
    <property type="term" value="P:adenylate cyclase-activating G protein-coupled receptor signaling pathway"/>
    <property type="evidence" value="ECO:0007669"/>
    <property type="project" value="TreeGrafter"/>
</dbReference>
<dbReference type="GO" id="GO:0031175">
    <property type="term" value="P:neuron projection development"/>
    <property type="evidence" value="ECO:0007669"/>
    <property type="project" value="TreeGrafter"/>
</dbReference>
<dbReference type="GO" id="GO:0007218">
    <property type="term" value="P:neuropeptide signaling pathway"/>
    <property type="evidence" value="ECO:0007669"/>
    <property type="project" value="TreeGrafter"/>
</dbReference>
<dbReference type="GO" id="GO:0070374">
    <property type="term" value="P:positive regulation of ERK1 and ERK2 cascade"/>
    <property type="evidence" value="ECO:0007669"/>
    <property type="project" value="TreeGrafter"/>
</dbReference>
<dbReference type="GO" id="GO:0032880">
    <property type="term" value="P:regulation of protein localization"/>
    <property type="evidence" value="ECO:0007669"/>
    <property type="project" value="TreeGrafter"/>
</dbReference>
<dbReference type="Gene3D" id="6.10.250.590">
    <property type="match status" value="1"/>
</dbReference>
<dbReference type="InterPro" id="IPR000532">
    <property type="entry name" value="Glucagon_GIP_secretin_VIP"/>
</dbReference>
<dbReference type="InterPro" id="IPR046963">
    <property type="entry name" value="VIP/GHRH-like"/>
</dbReference>
<dbReference type="PANTHER" id="PTHR11213">
    <property type="entry name" value="GLUCAGON-FAMILY NEUROPEPTIDE"/>
    <property type="match status" value="1"/>
</dbReference>
<dbReference type="PANTHER" id="PTHR11213:SF1">
    <property type="entry name" value="PITUITARY ADENYLATE CYCLASE-ACTIVATING POLYPEPTIDE"/>
    <property type="match status" value="1"/>
</dbReference>
<dbReference type="Pfam" id="PF00123">
    <property type="entry name" value="Hormone_2"/>
    <property type="match status" value="2"/>
</dbReference>
<dbReference type="PRINTS" id="PR00275">
    <property type="entry name" value="GLUCAGON"/>
</dbReference>
<dbReference type="SMART" id="SM00070">
    <property type="entry name" value="GLUCA"/>
    <property type="match status" value="2"/>
</dbReference>
<dbReference type="PROSITE" id="PS00260">
    <property type="entry name" value="GLUCAGON"/>
    <property type="match status" value="1"/>
</dbReference>
<sequence>MAKSSRATLALLIYGILMRYSQCTPIGMGFPNMRLDNDVFGDEGNSLSELSYEPDTMSARSRPALPEDAYTLYYPPERRAETHADGLLDRALRDILVQLSARKYLHSLTAVRVGEEEEDEEDSEPLSKRHSDGIFTDSYSRYRKQMAVKKYLAAVLGRRYRQRFRNKGRRLVVPSVWTGIRDTVIITPEKRGKRY</sequence>
<evidence type="ECO:0000255" key="1"/>
<evidence type="ECO:0000256" key="2">
    <source>
        <dbReference type="SAM" id="MobiDB-lite"/>
    </source>
</evidence>
<evidence type="ECO:0000305" key="3"/>